<accession>Q9LLA7</accession>
<dbReference type="EMBL" id="AF230698">
    <property type="protein sequence ID" value="AAF73927.1"/>
    <property type="molecule type" value="mRNA"/>
</dbReference>
<dbReference type="SMR" id="Q9LLA7"/>
<dbReference type="GO" id="GO:0005634">
    <property type="term" value="C:nucleus"/>
    <property type="evidence" value="ECO:0007669"/>
    <property type="project" value="UniProtKB-SubCell"/>
</dbReference>
<dbReference type="GO" id="GO:0003677">
    <property type="term" value="F:DNA binding"/>
    <property type="evidence" value="ECO:0007669"/>
    <property type="project" value="UniProtKB-KW"/>
</dbReference>
<dbReference type="GO" id="GO:0003700">
    <property type="term" value="F:DNA-binding transcription factor activity"/>
    <property type="evidence" value="ECO:0007669"/>
    <property type="project" value="InterPro"/>
</dbReference>
<dbReference type="GO" id="GO:0046983">
    <property type="term" value="F:protein dimerization activity"/>
    <property type="evidence" value="ECO:0007669"/>
    <property type="project" value="InterPro"/>
</dbReference>
<dbReference type="Gene3D" id="3.40.1810.10">
    <property type="entry name" value="Transcription factor, MADS-box"/>
    <property type="match status" value="1"/>
</dbReference>
<dbReference type="InterPro" id="IPR050142">
    <property type="entry name" value="MADS-box/MEF2_TF"/>
</dbReference>
<dbReference type="InterPro" id="IPR002487">
    <property type="entry name" value="TF_Kbox"/>
</dbReference>
<dbReference type="InterPro" id="IPR002100">
    <property type="entry name" value="TF_MADSbox"/>
</dbReference>
<dbReference type="InterPro" id="IPR036879">
    <property type="entry name" value="TF_MADSbox_sf"/>
</dbReference>
<dbReference type="PANTHER" id="PTHR48019">
    <property type="entry name" value="SERUM RESPONSE FACTOR HOMOLOG"/>
    <property type="match status" value="1"/>
</dbReference>
<dbReference type="Pfam" id="PF01486">
    <property type="entry name" value="K-box"/>
    <property type="match status" value="1"/>
</dbReference>
<dbReference type="Pfam" id="PF00319">
    <property type="entry name" value="SRF-TF"/>
    <property type="match status" value="1"/>
</dbReference>
<dbReference type="SMART" id="SM00432">
    <property type="entry name" value="MADS"/>
    <property type="match status" value="1"/>
</dbReference>
<dbReference type="SUPFAM" id="SSF55455">
    <property type="entry name" value="SRF-like"/>
    <property type="match status" value="1"/>
</dbReference>
<dbReference type="PROSITE" id="PS51297">
    <property type="entry name" value="K_BOX"/>
    <property type="match status" value="1"/>
</dbReference>
<dbReference type="PROSITE" id="PS50066">
    <property type="entry name" value="MADS_BOX_2"/>
    <property type="match status" value="1"/>
</dbReference>
<sequence>GGLLKKARELAILCDAQLGVIIFSSSGKMFEFSSPPISMREIIDRYQKLSGNCAPVYDNQQVYCEITRMKNEIDKLQATMRHFAGEDLTSLTMNEMLQLEQQLEISVNKVRSRKEQLLQQQLDNLRRKENMLEEQNRELYRVIQDHHAASMEQKMVDPSMLDHFGVFYQDDHQAARSSMLQLSPQLHPFRLQPAQPNLQDANLLPHDLQL</sequence>
<reference key="1">
    <citation type="journal article" date="2000" name="Int. J. Plant Sci.">
        <title>Evolution of the petal and stamen developmental programs: evidence from comparative studies of the lower eudicots and basal angiosperms.</title>
        <authorList>
            <person name="Kramer E.M."/>
            <person name="Irish V.F."/>
        </authorList>
    </citation>
    <scope>NUCLEOTIDE SEQUENCE [MRNA]</scope>
</reference>
<keyword id="KW-0238">DNA-binding</keyword>
<keyword id="KW-0539">Nucleus</keyword>
<keyword id="KW-0804">Transcription</keyword>
<keyword id="KW-0805">Transcription regulation</keyword>
<protein>
    <recommendedName>
        <fullName>MADS-box protein AeAP3-2</fullName>
    </recommendedName>
    <alternativeName>
        <fullName>APETALA3-2</fullName>
    </alternativeName>
</protein>
<feature type="chain" id="PRO_0000199496" description="MADS-box protein AeAP3-2">
    <location>
        <begin position="1" status="less than"/>
        <end position="210"/>
    </location>
</feature>
<feature type="domain" description="MADS-box" evidence="1">
    <location>
        <begin position="1" status="less than"/>
        <end position="36"/>
    </location>
</feature>
<feature type="domain" description="K-box" evidence="2">
    <location>
        <begin position="59"/>
        <end position="149"/>
    </location>
</feature>
<feature type="non-terminal residue">
    <location>
        <position position="1"/>
    </location>
</feature>
<evidence type="ECO:0000255" key="1">
    <source>
        <dbReference type="PROSITE-ProRule" id="PRU00251"/>
    </source>
</evidence>
<evidence type="ECO:0000255" key="2">
    <source>
        <dbReference type="PROSITE-ProRule" id="PRU00629"/>
    </source>
</evidence>
<organism>
    <name type="scientific">Asarum europaeum</name>
    <name type="common">Asarabacca</name>
    <dbReference type="NCBI Taxonomy" id="49456"/>
    <lineage>
        <taxon>Eukaryota</taxon>
        <taxon>Viridiplantae</taxon>
        <taxon>Streptophyta</taxon>
        <taxon>Embryophyta</taxon>
        <taxon>Tracheophyta</taxon>
        <taxon>Spermatophyta</taxon>
        <taxon>Magnoliopsida</taxon>
        <taxon>Magnoliidae</taxon>
        <taxon>Piperales</taxon>
        <taxon>Asaraceae</taxon>
        <taxon>Asarum</taxon>
    </lineage>
</organism>
<proteinExistence type="evidence at transcript level"/>
<name>AP32_ASAEU</name>
<gene>
    <name type="primary">AP3-2</name>
</gene>
<comment type="function">
    <text>Probable transcription factor.</text>
</comment>
<comment type="subcellular location">
    <subcellularLocation>
        <location evidence="1">Nucleus</location>
    </subcellularLocation>
</comment>
<comment type="tissue specificity">
    <text>Expressed exclusively in the carpel.</text>
</comment>